<sequence>MTKREQSLATPYLQFDRTQWAALRDSVPLTLTEEEIVKLKGINEDLSLDEVAQIYLPLSRLLNFYISSNLRRQAVLEQFLGTDGQRIPYVIGIAGSVAVGKSTTARLLQALLSRWPEHRSVELITTDGFLHPNKVLNERGLMKKKGFPESYDMHNLVKFVSEVKSGADYVTAPVYSHLIYDVVPDGNKVIKQPDILILEGLNVLQSGMDYPHDPHHVFVSDFVDFSIYVDAPEDLLQSWYINRFLKFRQGAFSNPDSYFHNYAKLPETEAIKIATQLWNEINGLNLKQNILPTRERASLIMTKSANHAVESVRLRK</sequence>
<dbReference type="EC" id="2.7.1.33" evidence="1"/>
<dbReference type="EMBL" id="CP000950">
    <property type="protein sequence ID" value="ACA66639.1"/>
    <property type="molecule type" value="Genomic_DNA"/>
</dbReference>
<dbReference type="RefSeq" id="WP_002212290.1">
    <property type="nucleotide sequence ID" value="NZ_CP009792.1"/>
</dbReference>
<dbReference type="SMR" id="B1JJI8"/>
<dbReference type="GeneID" id="57974956"/>
<dbReference type="KEGG" id="ypy:YPK_0328"/>
<dbReference type="PATRIC" id="fig|502800.11.peg.933"/>
<dbReference type="UniPathway" id="UPA00241">
    <property type="reaction ID" value="UER00352"/>
</dbReference>
<dbReference type="GO" id="GO:0005737">
    <property type="term" value="C:cytoplasm"/>
    <property type="evidence" value="ECO:0007669"/>
    <property type="project" value="UniProtKB-SubCell"/>
</dbReference>
<dbReference type="GO" id="GO:0005524">
    <property type="term" value="F:ATP binding"/>
    <property type="evidence" value="ECO:0007669"/>
    <property type="project" value="UniProtKB-UniRule"/>
</dbReference>
<dbReference type="GO" id="GO:0004594">
    <property type="term" value="F:pantothenate kinase activity"/>
    <property type="evidence" value="ECO:0007669"/>
    <property type="project" value="UniProtKB-UniRule"/>
</dbReference>
<dbReference type="GO" id="GO:0015937">
    <property type="term" value="P:coenzyme A biosynthetic process"/>
    <property type="evidence" value="ECO:0007669"/>
    <property type="project" value="UniProtKB-UniRule"/>
</dbReference>
<dbReference type="CDD" id="cd02025">
    <property type="entry name" value="PanK"/>
    <property type="match status" value="1"/>
</dbReference>
<dbReference type="FunFam" id="3.40.50.300:FF:000242">
    <property type="entry name" value="Pantothenate kinase"/>
    <property type="match status" value="1"/>
</dbReference>
<dbReference type="Gene3D" id="3.40.50.300">
    <property type="entry name" value="P-loop containing nucleotide triphosphate hydrolases"/>
    <property type="match status" value="1"/>
</dbReference>
<dbReference type="HAMAP" id="MF_00215">
    <property type="entry name" value="Pantothen_kinase_1"/>
    <property type="match status" value="1"/>
</dbReference>
<dbReference type="InterPro" id="IPR027417">
    <property type="entry name" value="P-loop_NTPase"/>
</dbReference>
<dbReference type="InterPro" id="IPR004566">
    <property type="entry name" value="PanK"/>
</dbReference>
<dbReference type="InterPro" id="IPR006083">
    <property type="entry name" value="PRK/URK"/>
</dbReference>
<dbReference type="NCBIfam" id="TIGR00554">
    <property type="entry name" value="panK_bact"/>
    <property type="match status" value="1"/>
</dbReference>
<dbReference type="PANTHER" id="PTHR10285">
    <property type="entry name" value="URIDINE KINASE"/>
    <property type="match status" value="1"/>
</dbReference>
<dbReference type="Pfam" id="PF00485">
    <property type="entry name" value="PRK"/>
    <property type="match status" value="1"/>
</dbReference>
<dbReference type="PIRSF" id="PIRSF000545">
    <property type="entry name" value="Pantothenate_kin"/>
    <property type="match status" value="1"/>
</dbReference>
<dbReference type="SUPFAM" id="SSF52540">
    <property type="entry name" value="P-loop containing nucleoside triphosphate hydrolases"/>
    <property type="match status" value="1"/>
</dbReference>
<accession>B1JJI8</accession>
<gene>
    <name evidence="1" type="primary">coaA</name>
    <name type="ordered locus">YPK_0328</name>
</gene>
<proteinExistence type="inferred from homology"/>
<feature type="chain" id="PRO_1000099962" description="Pantothenate kinase">
    <location>
        <begin position="1"/>
        <end position="316"/>
    </location>
</feature>
<feature type="binding site" evidence="1">
    <location>
        <begin position="95"/>
        <end position="102"/>
    </location>
    <ligand>
        <name>ATP</name>
        <dbReference type="ChEBI" id="CHEBI:30616"/>
    </ligand>
</feature>
<comment type="catalytic activity">
    <reaction evidence="1">
        <text>(R)-pantothenate + ATP = (R)-4'-phosphopantothenate + ADP + H(+)</text>
        <dbReference type="Rhea" id="RHEA:16373"/>
        <dbReference type="ChEBI" id="CHEBI:10986"/>
        <dbReference type="ChEBI" id="CHEBI:15378"/>
        <dbReference type="ChEBI" id="CHEBI:29032"/>
        <dbReference type="ChEBI" id="CHEBI:30616"/>
        <dbReference type="ChEBI" id="CHEBI:456216"/>
        <dbReference type="EC" id="2.7.1.33"/>
    </reaction>
</comment>
<comment type="pathway">
    <text evidence="1">Cofactor biosynthesis; coenzyme A biosynthesis; CoA from (R)-pantothenate: step 1/5.</text>
</comment>
<comment type="subcellular location">
    <subcellularLocation>
        <location evidence="1">Cytoplasm</location>
    </subcellularLocation>
</comment>
<comment type="similarity">
    <text evidence="1">Belongs to the prokaryotic pantothenate kinase family.</text>
</comment>
<protein>
    <recommendedName>
        <fullName evidence="1">Pantothenate kinase</fullName>
        <ecNumber evidence="1">2.7.1.33</ecNumber>
    </recommendedName>
    <alternativeName>
        <fullName evidence="1">Pantothenic acid kinase</fullName>
    </alternativeName>
</protein>
<evidence type="ECO:0000255" key="1">
    <source>
        <dbReference type="HAMAP-Rule" id="MF_00215"/>
    </source>
</evidence>
<reference key="1">
    <citation type="submission" date="2008-02" db="EMBL/GenBank/DDBJ databases">
        <title>Complete sequence of Yersinia pseudotuberculosis YPIII.</title>
        <authorList>
            <consortium name="US DOE Joint Genome Institute"/>
            <person name="Copeland A."/>
            <person name="Lucas S."/>
            <person name="Lapidus A."/>
            <person name="Glavina del Rio T."/>
            <person name="Dalin E."/>
            <person name="Tice H."/>
            <person name="Bruce D."/>
            <person name="Goodwin L."/>
            <person name="Pitluck S."/>
            <person name="Munk A.C."/>
            <person name="Brettin T."/>
            <person name="Detter J.C."/>
            <person name="Han C."/>
            <person name="Tapia R."/>
            <person name="Schmutz J."/>
            <person name="Larimer F."/>
            <person name="Land M."/>
            <person name="Hauser L."/>
            <person name="Challacombe J.F."/>
            <person name="Green L."/>
            <person name="Lindler L.E."/>
            <person name="Nikolich M.P."/>
            <person name="Richardson P."/>
        </authorList>
    </citation>
    <scope>NUCLEOTIDE SEQUENCE [LARGE SCALE GENOMIC DNA]</scope>
    <source>
        <strain>YPIII</strain>
    </source>
</reference>
<organism>
    <name type="scientific">Yersinia pseudotuberculosis serotype O:3 (strain YPIII)</name>
    <dbReference type="NCBI Taxonomy" id="502800"/>
    <lineage>
        <taxon>Bacteria</taxon>
        <taxon>Pseudomonadati</taxon>
        <taxon>Pseudomonadota</taxon>
        <taxon>Gammaproteobacteria</taxon>
        <taxon>Enterobacterales</taxon>
        <taxon>Yersiniaceae</taxon>
        <taxon>Yersinia</taxon>
    </lineage>
</organism>
<keyword id="KW-0067">ATP-binding</keyword>
<keyword id="KW-0173">Coenzyme A biosynthesis</keyword>
<keyword id="KW-0963">Cytoplasm</keyword>
<keyword id="KW-0418">Kinase</keyword>
<keyword id="KW-0547">Nucleotide-binding</keyword>
<keyword id="KW-0808">Transferase</keyword>
<name>COAA_YERPY</name>